<gene>
    <name evidence="1" type="primary">rimO</name>
    <name type="ordered locus">LBJ_2159</name>
</gene>
<reference key="1">
    <citation type="journal article" date="2006" name="Proc. Natl. Acad. Sci. U.S.A.">
        <title>Genome reduction in Leptospira borgpetersenii reflects limited transmission potential.</title>
        <authorList>
            <person name="Bulach D.M."/>
            <person name="Zuerner R.L."/>
            <person name="Wilson P."/>
            <person name="Seemann T."/>
            <person name="McGrath A."/>
            <person name="Cullen P.A."/>
            <person name="Davis J."/>
            <person name="Johnson M."/>
            <person name="Kuczek E."/>
            <person name="Alt D.P."/>
            <person name="Peterson-Burch B."/>
            <person name="Coppel R.L."/>
            <person name="Rood J.I."/>
            <person name="Davies J.K."/>
            <person name="Adler B."/>
        </authorList>
    </citation>
    <scope>NUCLEOTIDE SEQUENCE [LARGE SCALE GENOMIC DNA]</scope>
    <source>
        <strain>JB197</strain>
    </source>
</reference>
<name>RIMO_LEPBJ</name>
<feature type="chain" id="PRO_0000374879" description="Ribosomal protein uS12 methylthiotransferase RimO">
    <location>
        <begin position="1"/>
        <end position="439"/>
    </location>
</feature>
<feature type="domain" description="MTTase N-terminal" evidence="1">
    <location>
        <begin position="3"/>
        <end position="118"/>
    </location>
</feature>
<feature type="domain" description="Radical SAM core" evidence="2">
    <location>
        <begin position="143"/>
        <end position="370"/>
    </location>
</feature>
<feature type="domain" description="TRAM" evidence="1">
    <location>
        <begin position="373"/>
        <end position="438"/>
    </location>
</feature>
<feature type="binding site" evidence="1">
    <location>
        <position position="12"/>
    </location>
    <ligand>
        <name>[4Fe-4S] cluster</name>
        <dbReference type="ChEBI" id="CHEBI:49883"/>
        <label>1</label>
    </ligand>
</feature>
<feature type="binding site" evidence="1">
    <location>
        <position position="48"/>
    </location>
    <ligand>
        <name>[4Fe-4S] cluster</name>
        <dbReference type="ChEBI" id="CHEBI:49883"/>
        <label>1</label>
    </ligand>
</feature>
<feature type="binding site" evidence="1">
    <location>
        <position position="81"/>
    </location>
    <ligand>
        <name>[4Fe-4S] cluster</name>
        <dbReference type="ChEBI" id="CHEBI:49883"/>
        <label>1</label>
    </ligand>
</feature>
<feature type="binding site" evidence="1">
    <location>
        <position position="157"/>
    </location>
    <ligand>
        <name>[4Fe-4S] cluster</name>
        <dbReference type="ChEBI" id="CHEBI:49883"/>
        <label>2</label>
        <note>4Fe-4S-S-AdoMet</note>
    </ligand>
</feature>
<feature type="binding site" evidence="1">
    <location>
        <position position="161"/>
    </location>
    <ligand>
        <name>[4Fe-4S] cluster</name>
        <dbReference type="ChEBI" id="CHEBI:49883"/>
        <label>2</label>
        <note>4Fe-4S-S-AdoMet</note>
    </ligand>
</feature>
<feature type="binding site" evidence="1">
    <location>
        <position position="164"/>
    </location>
    <ligand>
        <name>[4Fe-4S] cluster</name>
        <dbReference type="ChEBI" id="CHEBI:49883"/>
        <label>2</label>
        <note>4Fe-4S-S-AdoMet</note>
    </ligand>
</feature>
<accession>Q04R21</accession>
<sequence length="439" mass="49956">MNKKFYITTLGCPKNTADSMSMHHSLLEEGFTPATFAEESDFHFINTCTFIQSATEETIQTILSAAQVKKQNHQKLVVVGCFAERYPDNISSEIPEVDLFFGTGRYAQAGKILREKFPDLSPPKREFNDSLLEKLKLSSEIENYSKPYAYVKVSDGCNRGCSFCIIPSFRGKFRESPVEDILRDVDRAIRAGAKEICLVSQDTVYYGRNSEVLLDMVRKVAEIDSLEVLRLLYLYPDKKTEKLLRLMGETPKIAPYLESPLQHVSSKILKSMNRVGESSTFKDLFALAREVKPGLEIRTSFIIGYPGEEPGDVDQVLRFIEETRPEKVNLFSYSPQEGTKGAELKQTVSEKEKSRRINLIRDVHLAILEEIHESRIGQTYDAIVDSVENDQAVVRRFQDAPEMDEVVYVDDISLIPGMIGKIRIDSFYEYDMNGTWISK</sequence>
<keyword id="KW-0004">4Fe-4S</keyword>
<keyword id="KW-0963">Cytoplasm</keyword>
<keyword id="KW-0408">Iron</keyword>
<keyword id="KW-0411">Iron-sulfur</keyword>
<keyword id="KW-0479">Metal-binding</keyword>
<keyword id="KW-0949">S-adenosyl-L-methionine</keyword>
<keyword id="KW-0808">Transferase</keyword>
<comment type="function">
    <text evidence="1">Catalyzes the methylthiolation of an aspartic acid residue of ribosomal protein uS12.</text>
</comment>
<comment type="catalytic activity">
    <reaction evidence="1">
        <text>L-aspartate(89)-[ribosomal protein uS12]-hydrogen + (sulfur carrier)-SH + AH2 + 2 S-adenosyl-L-methionine = 3-methylsulfanyl-L-aspartate(89)-[ribosomal protein uS12]-hydrogen + (sulfur carrier)-H + 5'-deoxyadenosine + L-methionine + A + S-adenosyl-L-homocysteine + 2 H(+)</text>
        <dbReference type="Rhea" id="RHEA:37087"/>
        <dbReference type="Rhea" id="RHEA-COMP:10460"/>
        <dbReference type="Rhea" id="RHEA-COMP:10461"/>
        <dbReference type="Rhea" id="RHEA-COMP:14737"/>
        <dbReference type="Rhea" id="RHEA-COMP:14739"/>
        <dbReference type="ChEBI" id="CHEBI:13193"/>
        <dbReference type="ChEBI" id="CHEBI:15378"/>
        <dbReference type="ChEBI" id="CHEBI:17319"/>
        <dbReference type="ChEBI" id="CHEBI:17499"/>
        <dbReference type="ChEBI" id="CHEBI:29917"/>
        <dbReference type="ChEBI" id="CHEBI:29961"/>
        <dbReference type="ChEBI" id="CHEBI:57844"/>
        <dbReference type="ChEBI" id="CHEBI:57856"/>
        <dbReference type="ChEBI" id="CHEBI:59789"/>
        <dbReference type="ChEBI" id="CHEBI:64428"/>
        <dbReference type="ChEBI" id="CHEBI:73599"/>
        <dbReference type="EC" id="2.8.4.4"/>
    </reaction>
</comment>
<comment type="cofactor">
    <cofactor evidence="1">
        <name>[4Fe-4S] cluster</name>
        <dbReference type="ChEBI" id="CHEBI:49883"/>
    </cofactor>
    <text evidence="1">Binds 2 [4Fe-4S] clusters. One cluster is coordinated with 3 cysteines and an exchangeable S-adenosyl-L-methionine.</text>
</comment>
<comment type="subcellular location">
    <subcellularLocation>
        <location evidence="1">Cytoplasm</location>
    </subcellularLocation>
</comment>
<comment type="similarity">
    <text evidence="1">Belongs to the methylthiotransferase family. RimO subfamily.</text>
</comment>
<protein>
    <recommendedName>
        <fullName evidence="1">Ribosomal protein uS12 methylthiotransferase RimO</fullName>
        <shortName evidence="1">uS12 MTTase</shortName>
        <shortName evidence="1">uS12 methylthiotransferase</shortName>
        <ecNumber evidence="1">2.8.4.4</ecNumber>
    </recommendedName>
    <alternativeName>
        <fullName evidence="1">Ribosomal protein uS12 (aspartate-C(3))-methylthiotransferase</fullName>
    </alternativeName>
    <alternativeName>
        <fullName evidence="1">Ribosome maturation factor RimO</fullName>
    </alternativeName>
</protein>
<organism>
    <name type="scientific">Leptospira borgpetersenii serovar Hardjo-bovis (strain JB197)</name>
    <dbReference type="NCBI Taxonomy" id="355277"/>
    <lineage>
        <taxon>Bacteria</taxon>
        <taxon>Pseudomonadati</taxon>
        <taxon>Spirochaetota</taxon>
        <taxon>Spirochaetia</taxon>
        <taxon>Leptospirales</taxon>
        <taxon>Leptospiraceae</taxon>
        <taxon>Leptospira</taxon>
    </lineage>
</organism>
<dbReference type="EC" id="2.8.4.4" evidence="1"/>
<dbReference type="EMBL" id="CP000350">
    <property type="protein sequence ID" value="ABJ76649.1"/>
    <property type="molecule type" value="Genomic_DNA"/>
</dbReference>
<dbReference type="RefSeq" id="WP_011671921.1">
    <property type="nucleotide sequence ID" value="NC_008510.1"/>
</dbReference>
<dbReference type="SMR" id="Q04R21"/>
<dbReference type="KEGG" id="lbj:LBJ_2159"/>
<dbReference type="HOGENOM" id="CLU_018697_0_1_12"/>
<dbReference type="Proteomes" id="UP000000656">
    <property type="component" value="Chromosome 1"/>
</dbReference>
<dbReference type="GO" id="GO:0005829">
    <property type="term" value="C:cytosol"/>
    <property type="evidence" value="ECO:0007669"/>
    <property type="project" value="TreeGrafter"/>
</dbReference>
<dbReference type="GO" id="GO:0051539">
    <property type="term" value="F:4 iron, 4 sulfur cluster binding"/>
    <property type="evidence" value="ECO:0007669"/>
    <property type="project" value="UniProtKB-UniRule"/>
</dbReference>
<dbReference type="GO" id="GO:0035599">
    <property type="term" value="F:aspartic acid methylthiotransferase activity"/>
    <property type="evidence" value="ECO:0007669"/>
    <property type="project" value="TreeGrafter"/>
</dbReference>
<dbReference type="GO" id="GO:0046872">
    <property type="term" value="F:metal ion binding"/>
    <property type="evidence" value="ECO:0007669"/>
    <property type="project" value="UniProtKB-KW"/>
</dbReference>
<dbReference type="GO" id="GO:0103039">
    <property type="term" value="F:protein methylthiotransferase activity"/>
    <property type="evidence" value="ECO:0007669"/>
    <property type="project" value="UniProtKB-EC"/>
</dbReference>
<dbReference type="GO" id="GO:0006400">
    <property type="term" value="P:tRNA modification"/>
    <property type="evidence" value="ECO:0007669"/>
    <property type="project" value="InterPro"/>
</dbReference>
<dbReference type="CDD" id="cd01335">
    <property type="entry name" value="Radical_SAM"/>
    <property type="match status" value="1"/>
</dbReference>
<dbReference type="FunFam" id="3.40.50.12160:FF:000010">
    <property type="entry name" value="Ribosomal protein S12 methylthiotransferase RimO"/>
    <property type="match status" value="1"/>
</dbReference>
<dbReference type="FunFam" id="3.80.30.20:FF:000001">
    <property type="entry name" value="tRNA-2-methylthio-N(6)-dimethylallyladenosine synthase 2"/>
    <property type="match status" value="1"/>
</dbReference>
<dbReference type="Gene3D" id="3.40.50.12160">
    <property type="entry name" value="Methylthiotransferase, N-terminal domain"/>
    <property type="match status" value="1"/>
</dbReference>
<dbReference type="Gene3D" id="2.40.50.140">
    <property type="entry name" value="Nucleic acid-binding proteins"/>
    <property type="match status" value="1"/>
</dbReference>
<dbReference type="Gene3D" id="3.80.30.20">
    <property type="entry name" value="tm_1862 like domain"/>
    <property type="match status" value="1"/>
</dbReference>
<dbReference type="HAMAP" id="MF_01865">
    <property type="entry name" value="MTTase_RimO"/>
    <property type="match status" value="1"/>
</dbReference>
<dbReference type="InterPro" id="IPR006638">
    <property type="entry name" value="Elp3/MiaA/NifB-like_rSAM"/>
</dbReference>
<dbReference type="InterPro" id="IPR005839">
    <property type="entry name" value="Methylthiotransferase"/>
</dbReference>
<dbReference type="InterPro" id="IPR020612">
    <property type="entry name" value="Methylthiotransferase_CS"/>
</dbReference>
<dbReference type="InterPro" id="IPR013848">
    <property type="entry name" value="Methylthiotransferase_N"/>
</dbReference>
<dbReference type="InterPro" id="IPR038135">
    <property type="entry name" value="Methylthiotransferase_N_sf"/>
</dbReference>
<dbReference type="InterPro" id="IPR012340">
    <property type="entry name" value="NA-bd_OB-fold"/>
</dbReference>
<dbReference type="InterPro" id="IPR005840">
    <property type="entry name" value="Ribosomal_uS12_MeSTrfase_RimO"/>
</dbReference>
<dbReference type="InterPro" id="IPR007197">
    <property type="entry name" value="rSAM"/>
</dbReference>
<dbReference type="InterPro" id="IPR023404">
    <property type="entry name" value="rSAM_horseshoe"/>
</dbReference>
<dbReference type="InterPro" id="IPR002792">
    <property type="entry name" value="TRAM_dom"/>
</dbReference>
<dbReference type="NCBIfam" id="TIGR01125">
    <property type="entry name" value="30S ribosomal protein S12 methylthiotransferase RimO"/>
    <property type="match status" value="1"/>
</dbReference>
<dbReference type="NCBIfam" id="TIGR00089">
    <property type="entry name" value="MiaB/RimO family radical SAM methylthiotransferase"/>
    <property type="match status" value="1"/>
</dbReference>
<dbReference type="PANTHER" id="PTHR43837">
    <property type="entry name" value="RIBOSOMAL PROTEIN S12 METHYLTHIOTRANSFERASE RIMO"/>
    <property type="match status" value="1"/>
</dbReference>
<dbReference type="PANTHER" id="PTHR43837:SF1">
    <property type="entry name" value="RIBOSOMAL PROTEIN US12 METHYLTHIOTRANSFERASE RIMO"/>
    <property type="match status" value="1"/>
</dbReference>
<dbReference type="Pfam" id="PF04055">
    <property type="entry name" value="Radical_SAM"/>
    <property type="match status" value="1"/>
</dbReference>
<dbReference type="Pfam" id="PF18693">
    <property type="entry name" value="TRAM_2"/>
    <property type="match status" value="1"/>
</dbReference>
<dbReference type="Pfam" id="PF00919">
    <property type="entry name" value="UPF0004"/>
    <property type="match status" value="1"/>
</dbReference>
<dbReference type="SFLD" id="SFLDG01082">
    <property type="entry name" value="B12-binding_domain_containing"/>
    <property type="match status" value="1"/>
</dbReference>
<dbReference type="SFLD" id="SFLDG01061">
    <property type="entry name" value="methylthiotransferase"/>
    <property type="match status" value="1"/>
</dbReference>
<dbReference type="SFLD" id="SFLDS00029">
    <property type="entry name" value="Radical_SAM"/>
    <property type="match status" value="1"/>
</dbReference>
<dbReference type="SMART" id="SM00729">
    <property type="entry name" value="Elp3"/>
    <property type="match status" value="1"/>
</dbReference>
<dbReference type="SUPFAM" id="SSF102114">
    <property type="entry name" value="Radical SAM enzymes"/>
    <property type="match status" value="1"/>
</dbReference>
<dbReference type="PROSITE" id="PS51449">
    <property type="entry name" value="MTTASE_N"/>
    <property type="match status" value="1"/>
</dbReference>
<dbReference type="PROSITE" id="PS01278">
    <property type="entry name" value="MTTASE_RADICAL"/>
    <property type="match status" value="1"/>
</dbReference>
<dbReference type="PROSITE" id="PS51918">
    <property type="entry name" value="RADICAL_SAM"/>
    <property type="match status" value="1"/>
</dbReference>
<proteinExistence type="inferred from homology"/>
<evidence type="ECO:0000255" key="1">
    <source>
        <dbReference type="HAMAP-Rule" id="MF_01865"/>
    </source>
</evidence>
<evidence type="ECO:0000255" key="2">
    <source>
        <dbReference type="PROSITE-ProRule" id="PRU01266"/>
    </source>
</evidence>